<accession>P0C0F1</accession>
<accession>P0A359</accession>
<accession>Q48W92</accession>
<accession>Q54974</accession>
<proteinExistence type="inferred from homology"/>
<reference key="1">
    <citation type="journal article" date="2001" name="Proc. Natl. Acad. Sci. U.S.A.">
        <title>Complete genome sequence of an M1 strain of Streptococcus pyogenes.</title>
        <authorList>
            <person name="Ferretti J.J."/>
            <person name="McShan W.M."/>
            <person name="Ajdic D.J."/>
            <person name="Savic D.J."/>
            <person name="Savic G."/>
            <person name="Lyon K."/>
            <person name="Primeaux C."/>
            <person name="Sezate S."/>
            <person name="Suvorov A.N."/>
            <person name="Kenton S."/>
            <person name="Lai H.S."/>
            <person name="Lin S.P."/>
            <person name="Qian Y."/>
            <person name="Jia H.G."/>
            <person name="Najar F.Z."/>
            <person name="Ren Q."/>
            <person name="Zhu H."/>
            <person name="Song L."/>
            <person name="White J."/>
            <person name="Yuan X."/>
            <person name="Clifton S.W."/>
            <person name="Roe B.A."/>
            <person name="McLaughlin R.E."/>
        </authorList>
    </citation>
    <scope>NUCLEOTIDE SEQUENCE [LARGE SCALE GENOMIC DNA]</scope>
    <source>
        <strain>ATCC 700294 / SF370 / Serotype M1</strain>
    </source>
</reference>
<reference key="2">
    <citation type="journal article" date="2005" name="J. Infect. Dis.">
        <title>Evolutionary origin and emergence of a highly successful clone of serotype M1 group A Streptococcus involved multiple horizontal gene transfer events.</title>
        <authorList>
            <person name="Sumby P."/>
            <person name="Porcella S.F."/>
            <person name="Madrigal A.G."/>
            <person name="Barbian K.D."/>
            <person name="Virtaneva K."/>
            <person name="Ricklefs S.M."/>
            <person name="Sturdevant D.E."/>
            <person name="Graham M.R."/>
            <person name="Vuopio-Varkila J."/>
            <person name="Hoe N.P."/>
            <person name="Musser J.M."/>
        </authorList>
    </citation>
    <scope>NUCLEOTIDE SEQUENCE [LARGE SCALE GENOMIC DNA]</scope>
    <source>
        <strain>ATCC BAA-947 / MGAS5005 / Serotype M1</strain>
    </source>
</reference>
<feature type="chain" id="PRO_0000100334" description="Major cold shock protein">
    <location>
        <begin position="1"/>
        <end position="67"/>
    </location>
</feature>
<feature type="domain" description="CSD">
    <location>
        <begin position="4"/>
        <end position="63"/>
    </location>
</feature>
<dbReference type="EMBL" id="AE004092">
    <property type="protein sequence ID" value="AAK34731.1"/>
    <property type="molecule type" value="Genomic_DNA"/>
</dbReference>
<dbReference type="EMBL" id="CP000017">
    <property type="protein sequence ID" value="AAZ52383.1"/>
    <property type="status" value="ALT_INIT"/>
    <property type="molecule type" value="Genomic_DNA"/>
</dbReference>
<dbReference type="RefSeq" id="NP_270010.1">
    <property type="nucleotide sequence ID" value="NC_002737.2"/>
</dbReference>
<dbReference type="SMR" id="P0C0F1"/>
<dbReference type="PaxDb" id="1314-HKU360_01879"/>
<dbReference type="KEGG" id="spy:SPy_2077"/>
<dbReference type="KEGG" id="spz:M5005_Spy1765"/>
<dbReference type="PATRIC" id="fig|160490.10.peg.1800"/>
<dbReference type="HOGENOM" id="CLU_117621_6_1_9"/>
<dbReference type="OMA" id="EEIFVHV"/>
<dbReference type="Proteomes" id="UP000000750">
    <property type="component" value="Chromosome"/>
</dbReference>
<dbReference type="GO" id="GO:0005737">
    <property type="term" value="C:cytoplasm"/>
    <property type="evidence" value="ECO:0007669"/>
    <property type="project" value="UniProtKB-SubCell"/>
</dbReference>
<dbReference type="GO" id="GO:0003677">
    <property type="term" value="F:DNA binding"/>
    <property type="evidence" value="ECO:0007669"/>
    <property type="project" value="UniProtKB-KW"/>
</dbReference>
<dbReference type="CDD" id="cd04458">
    <property type="entry name" value="CSP_CDS"/>
    <property type="match status" value="1"/>
</dbReference>
<dbReference type="FunFam" id="2.40.50.140:FF:000006">
    <property type="entry name" value="Cold shock protein CspC"/>
    <property type="match status" value="1"/>
</dbReference>
<dbReference type="Gene3D" id="6.20.370.130">
    <property type="match status" value="1"/>
</dbReference>
<dbReference type="Gene3D" id="2.40.50.140">
    <property type="entry name" value="Nucleic acid-binding proteins"/>
    <property type="match status" value="1"/>
</dbReference>
<dbReference type="InterPro" id="IPR012156">
    <property type="entry name" value="Cold_shock_CspA"/>
</dbReference>
<dbReference type="InterPro" id="IPR050181">
    <property type="entry name" value="Cold_shock_domain"/>
</dbReference>
<dbReference type="InterPro" id="IPR011129">
    <property type="entry name" value="CSD"/>
</dbReference>
<dbReference type="InterPro" id="IPR019844">
    <property type="entry name" value="CSD_CS"/>
</dbReference>
<dbReference type="InterPro" id="IPR002059">
    <property type="entry name" value="CSP_DNA-bd"/>
</dbReference>
<dbReference type="InterPro" id="IPR012340">
    <property type="entry name" value="NA-bd_OB-fold"/>
</dbReference>
<dbReference type="PANTHER" id="PTHR11544">
    <property type="entry name" value="COLD SHOCK DOMAIN CONTAINING PROTEINS"/>
    <property type="match status" value="1"/>
</dbReference>
<dbReference type="Pfam" id="PF00313">
    <property type="entry name" value="CSD"/>
    <property type="match status" value="1"/>
</dbReference>
<dbReference type="PIRSF" id="PIRSF002599">
    <property type="entry name" value="Cold_shock_A"/>
    <property type="match status" value="1"/>
</dbReference>
<dbReference type="PRINTS" id="PR00050">
    <property type="entry name" value="COLDSHOCK"/>
</dbReference>
<dbReference type="SMART" id="SM00357">
    <property type="entry name" value="CSP"/>
    <property type="match status" value="1"/>
</dbReference>
<dbReference type="SUPFAM" id="SSF50249">
    <property type="entry name" value="Nucleic acid-binding proteins"/>
    <property type="match status" value="1"/>
</dbReference>
<dbReference type="PROSITE" id="PS00352">
    <property type="entry name" value="CSD_1"/>
    <property type="match status" value="1"/>
</dbReference>
<dbReference type="PROSITE" id="PS51857">
    <property type="entry name" value="CSD_2"/>
    <property type="match status" value="1"/>
</dbReference>
<organism>
    <name type="scientific">Streptococcus pyogenes serotype M1</name>
    <dbReference type="NCBI Taxonomy" id="301447"/>
    <lineage>
        <taxon>Bacteria</taxon>
        <taxon>Bacillati</taxon>
        <taxon>Bacillota</taxon>
        <taxon>Bacilli</taxon>
        <taxon>Lactobacillales</taxon>
        <taxon>Streptococcaceae</taxon>
        <taxon>Streptococcus</taxon>
    </lineage>
</organism>
<protein>
    <recommendedName>
        <fullName>Major cold shock protein</fullName>
    </recommendedName>
</protein>
<gene>
    <name type="primary">cspA</name>
    <name type="synonym">csp</name>
    <name type="synonym">cspC</name>
    <name type="ordered locus">SPy_2077</name>
    <name type="ordered locus">M5005_Spy1765</name>
</gene>
<keyword id="KW-0010">Activator</keyword>
<keyword id="KW-0963">Cytoplasm</keyword>
<keyword id="KW-0238">DNA-binding</keyword>
<keyword id="KW-1185">Reference proteome</keyword>
<keyword id="KW-0346">Stress response</keyword>
<keyword id="KW-0804">Transcription</keyword>
<keyword id="KW-0805">Transcription regulation</keyword>
<comment type="subunit">
    <text evidence="1">Homodimer.</text>
</comment>
<comment type="subcellular location">
    <subcellularLocation>
        <location evidence="1">Cytoplasm</location>
    </subcellularLocation>
</comment>
<comment type="induction">
    <text evidence="1">In response to low temperature.</text>
</comment>
<comment type="sequence caution" evidence="2">
    <conflict type="erroneous initiation">
        <sequence resource="EMBL-CDS" id="AAZ52383"/>
    </conflict>
</comment>
<sequence length="67" mass="7322">MAQGTVKWFNAEKGFGFISTENGQDVFAHFSAIQTNGFKTLEEGQKVAFDVEEGQRGPQAVNITKLA</sequence>
<evidence type="ECO:0000250" key="1"/>
<evidence type="ECO:0000305" key="2"/>
<name>CSPA_STRP1</name>